<dbReference type="EMBL" id="CP000029">
    <property type="protein sequence ID" value="AAW55245.1"/>
    <property type="molecule type" value="Genomic_DNA"/>
</dbReference>
<dbReference type="RefSeq" id="WP_002489284.1">
    <property type="nucleotide sequence ID" value="NC_002976.3"/>
</dbReference>
<dbReference type="SMR" id="Q5HLV9"/>
<dbReference type="STRING" id="176279.SERP1873"/>
<dbReference type="KEGG" id="ser:SERP1873"/>
<dbReference type="eggNOG" id="COG0830">
    <property type="taxonomic scope" value="Bacteria"/>
</dbReference>
<dbReference type="HOGENOM" id="CLU_049215_4_2_9"/>
<dbReference type="Proteomes" id="UP000000531">
    <property type="component" value="Chromosome"/>
</dbReference>
<dbReference type="GO" id="GO:0005737">
    <property type="term" value="C:cytoplasm"/>
    <property type="evidence" value="ECO:0007669"/>
    <property type="project" value="UniProtKB-SubCell"/>
</dbReference>
<dbReference type="GO" id="GO:0016151">
    <property type="term" value="F:nickel cation binding"/>
    <property type="evidence" value="ECO:0007669"/>
    <property type="project" value="UniProtKB-UniRule"/>
</dbReference>
<dbReference type="Gene3D" id="1.10.4190.10">
    <property type="entry name" value="Urease accessory protein UreF"/>
    <property type="match status" value="1"/>
</dbReference>
<dbReference type="HAMAP" id="MF_01385">
    <property type="entry name" value="UreF"/>
    <property type="match status" value="1"/>
</dbReference>
<dbReference type="InterPro" id="IPR002639">
    <property type="entry name" value="UreF"/>
</dbReference>
<dbReference type="InterPro" id="IPR038277">
    <property type="entry name" value="UreF_sf"/>
</dbReference>
<dbReference type="PANTHER" id="PTHR33620">
    <property type="entry name" value="UREASE ACCESSORY PROTEIN F"/>
    <property type="match status" value="1"/>
</dbReference>
<dbReference type="PANTHER" id="PTHR33620:SF1">
    <property type="entry name" value="UREASE ACCESSORY PROTEIN F"/>
    <property type="match status" value="1"/>
</dbReference>
<dbReference type="Pfam" id="PF01730">
    <property type="entry name" value="UreF"/>
    <property type="match status" value="1"/>
</dbReference>
<dbReference type="PIRSF" id="PIRSF009467">
    <property type="entry name" value="Ureas_acces_UreF"/>
    <property type="match status" value="1"/>
</dbReference>
<reference key="1">
    <citation type="journal article" date="2005" name="J. Bacteriol.">
        <title>Insights on evolution of virulence and resistance from the complete genome analysis of an early methicillin-resistant Staphylococcus aureus strain and a biofilm-producing methicillin-resistant Staphylococcus epidermidis strain.</title>
        <authorList>
            <person name="Gill S.R."/>
            <person name="Fouts D.E."/>
            <person name="Archer G.L."/>
            <person name="Mongodin E.F."/>
            <person name="DeBoy R.T."/>
            <person name="Ravel J."/>
            <person name="Paulsen I.T."/>
            <person name="Kolonay J.F."/>
            <person name="Brinkac L.M."/>
            <person name="Beanan M.J."/>
            <person name="Dodson R.J."/>
            <person name="Daugherty S.C."/>
            <person name="Madupu R."/>
            <person name="Angiuoli S.V."/>
            <person name="Durkin A.S."/>
            <person name="Haft D.H."/>
            <person name="Vamathevan J.J."/>
            <person name="Khouri H."/>
            <person name="Utterback T.R."/>
            <person name="Lee C."/>
            <person name="Dimitrov G."/>
            <person name="Jiang L."/>
            <person name="Qin H."/>
            <person name="Weidman J."/>
            <person name="Tran K."/>
            <person name="Kang K.H."/>
            <person name="Hance I.R."/>
            <person name="Nelson K.E."/>
            <person name="Fraser C.M."/>
        </authorList>
    </citation>
    <scope>NUCLEOTIDE SEQUENCE [LARGE SCALE GENOMIC DNA]</scope>
    <source>
        <strain>ATCC 35984 / DSM 28319 / BCRC 17069 / CCUG 31568 / BM 3577 / RP62A</strain>
    </source>
</reference>
<name>UREF_STAEQ</name>
<organism>
    <name type="scientific">Staphylococcus epidermidis (strain ATCC 35984 / DSM 28319 / BCRC 17069 / CCUG 31568 / BM 3577 / RP62A)</name>
    <dbReference type="NCBI Taxonomy" id="176279"/>
    <lineage>
        <taxon>Bacteria</taxon>
        <taxon>Bacillati</taxon>
        <taxon>Bacillota</taxon>
        <taxon>Bacilli</taxon>
        <taxon>Bacillales</taxon>
        <taxon>Staphylococcaceae</taxon>
        <taxon>Staphylococcus</taxon>
    </lineage>
</organism>
<proteinExistence type="inferred from homology"/>
<protein>
    <recommendedName>
        <fullName evidence="1">Urease accessory protein UreF</fullName>
    </recommendedName>
</protein>
<keyword id="KW-0143">Chaperone</keyword>
<keyword id="KW-0963">Cytoplasm</keyword>
<keyword id="KW-0996">Nickel insertion</keyword>
<keyword id="KW-1185">Reference proteome</keyword>
<accession>Q5HLV9</accession>
<sequence>MIDHQHLRLFQFCDSQFPTGAFSHSFGLETYIQRETVHDTETFIKWLHLFINEQLTYSDGIAMRIVYHALINNDKDKILDINQKLFVQNLPKETRIGAKQMGTRMVKLALDLYDSEWIQWYYNQMKNNKIKLHPAVCFTMLGHFLGVDVESIIDYYLYQNISSLTQNAVRAIPLGQTAGQQVVTEMIAHIEKTRHHILELDEIDFGMTAPGLELNQMEHENVHVRIFIS</sequence>
<evidence type="ECO:0000255" key="1">
    <source>
        <dbReference type="HAMAP-Rule" id="MF_01385"/>
    </source>
</evidence>
<comment type="function">
    <text evidence="1">Required for maturation of urease via the functional incorporation of the urease nickel metallocenter.</text>
</comment>
<comment type="subunit">
    <text evidence="1">UreD, UreF and UreG form a complex that acts as a GTP-hydrolysis-dependent molecular chaperone, activating the urease apoprotein by helping to assemble the nickel containing metallocenter of UreC. The UreE protein probably delivers the nickel.</text>
</comment>
<comment type="subcellular location">
    <subcellularLocation>
        <location evidence="1">Cytoplasm</location>
    </subcellularLocation>
</comment>
<comment type="similarity">
    <text evidence="1">Belongs to the UreF family.</text>
</comment>
<gene>
    <name evidence="1" type="primary">ureF</name>
    <name type="ordered locus">SERP1873</name>
</gene>
<feature type="chain" id="PRO_0000344194" description="Urease accessory protein UreF">
    <location>
        <begin position="1"/>
        <end position="229"/>
    </location>
</feature>